<accession>Q45133</accession>
<accession>D3G1H5</accession>
<dbReference type="EMBL" id="U39410">
    <property type="protein sequence ID" value="AAB05373.1"/>
    <property type="molecule type" value="Genomic_DNA"/>
</dbReference>
<dbReference type="EMBL" id="CP001879">
    <property type="protein sequence ID" value="ADC52201.1"/>
    <property type="molecule type" value="Genomic_DNA"/>
</dbReference>
<dbReference type="RefSeq" id="WP_012961110.1">
    <property type="nucleotide sequence ID" value="NC_013792.1"/>
</dbReference>
<dbReference type="SMR" id="Q45133"/>
<dbReference type="KEGG" id="bpf:BpOF4_21029"/>
<dbReference type="eggNOG" id="COG2320">
    <property type="taxonomic scope" value="Bacteria"/>
</dbReference>
<dbReference type="HOGENOM" id="CLU_086407_4_1_9"/>
<dbReference type="Proteomes" id="UP000001544">
    <property type="component" value="Plasmid pBpOF4-01"/>
</dbReference>
<dbReference type="Gene3D" id="3.30.460.10">
    <property type="entry name" value="Beta Polymerase, domain 2"/>
    <property type="match status" value="1"/>
</dbReference>
<dbReference type="InterPro" id="IPR007344">
    <property type="entry name" value="GrpB/CoaE"/>
</dbReference>
<dbReference type="InterPro" id="IPR043519">
    <property type="entry name" value="NT_sf"/>
</dbReference>
<dbReference type="PANTHER" id="PTHR34822">
    <property type="entry name" value="GRPB DOMAIN PROTEIN (AFU_ORTHOLOGUE AFUA_1G01530)"/>
    <property type="match status" value="1"/>
</dbReference>
<dbReference type="PANTHER" id="PTHR34822:SF1">
    <property type="entry name" value="GRPB FAMILY PROTEIN"/>
    <property type="match status" value="1"/>
</dbReference>
<dbReference type="Pfam" id="PF04229">
    <property type="entry name" value="GrpB"/>
    <property type="match status" value="1"/>
</dbReference>
<dbReference type="SUPFAM" id="SSF81301">
    <property type="entry name" value="Nucleotidyltransferase"/>
    <property type="match status" value="1"/>
</dbReference>
<geneLocation type="plasmid">
    <name>pBpOF4-01</name>
</geneLocation>
<name>GRPB_ALKPO</name>
<protein>
    <recommendedName>
        <fullName>Glutamate-rich protein GrpB</fullName>
    </recommendedName>
</protein>
<evidence type="ECO:0000305" key="1"/>
<reference key="1">
    <citation type="journal article" date="1996" name="J. Bacteriol.">
        <title>Purification of a cytochrome bd terminal oxidase encoded by the Escherichia coli app locus from a delta cyo delta cyd strain complemented by genes from Bacillus firmus OF4.</title>
        <authorList>
            <person name="Sturr M.G."/>
            <person name="Krulwich T.A."/>
            <person name="Hicks D.B."/>
        </authorList>
    </citation>
    <scope>NUCLEOTIDE SEQUENCE [GENOMIC DNA]</scope>
</reference>
<reference key="2">
    <citation type="journal article" date="2011" name="Environ. Microbiol.">
        <title>Genome of alkaliphilic Bacillus pseudofirmus OF4 reveals adaptations that support the ability to grow in an external pH range from 7.5 to 11.4.</title>
        <authorList>
            <person name="Janto B."/>
            <person name="Ahmed A."/>
            <person name="Ito M."/>
            <person name="Liu J."/>
            <person name="Hicks D.B."/>
            <person name="Pagni S."/>
            <person name="Fackelmayer O.J."/>
            <person name="Smith T.A."/>
            <person name="Earl J."/>
            <person name="Elbourne L.D."/>
            <person name="Hassan K."/>
            <person name="Paulsen I.T."/>
            <person name="Kolsto A.B."/>
            <person name="Tourasse N.J."/>
            <person name="Ehrlich G.D."/>
            <person name="Boissy R."/>
            <person name="Ivey D.M."/>
            <person name="Li G."/>
            <person name="Xue Y."/>
            <person name="Ma Y."/>
            <person name="Hu F.Z."/>
            <person name="Krulwich T.A."/>
        </authorList>
    </citation>
    <scope>NUCLEOTIDE SEQUENCE [LARGE SCALE GENOMIC DNA]</scope>
    <source>
        <strain>ATCC BAA-2126 / JCM 17055 / OF4</strain>
        <plasmid>pBpOF4-01</plasmid>
    </source>
</reference>
<comment type="similarity">
    <text evidence="1">Belongs to the UPF0157 (GrpB) family.</text>
</comment>
<feature type="chain" id="PRO_0000216125" description="Glutamate-rich protein GrpB">
    <location>
        <begin position="1"/>
        <end position="174"/>
    </location>
</feature>
<feature type="sequence conflict" description="In Ref. 1; AAB05373." evidence="1" ref="1">
    <original>D</original>
    <variation>H</variation>
    <location>
        <position position="23"/>
    </location>
</feature>
<feature type="sequence conflict" description="In Ref. 1; AAB05373." evidence="1" ref="1">
    <original>K</original>
    <variation>T</variation>
    <location>
        <position position="164"/>
    </location>
</feature>
<proteinExistence type="inferred from homology"/>
<keyword id="KW-0614">Plasmid</keyword>
<keyword id="KW-1185">Reference proteome</keyword>
<gene>
    <name type="primary">grpB</name>
    <name type="ordered locus">BpOF4_21029</name>
</gene>
<sequence length="174" mass="20301">MLGVNKGEVILVTHSENWKRLFDKEKSLLETIIGEQVKDIQQFGSTAIKGIEAKPIIDILVGVESLKDVEKFNNERLKEAGYYHLSRVQIDGKEVFAKFTDLENLTKTHILHVVEYQGDWWNEHISFRDYLNANPLVSKEYESLKKNLAEKYPNDEHSYTNEKKQFVDEILNEM</sequence>
<organism>
    <name type="scientific">Alkalihalophilus pseudofirmus (strain ATCC BAA-2126 / JCM 17055 / OF4)</name>
    <name type="common">Bacillus pseudofirmus</name>
    <dbReference type="NCBI Taxonomy" id="398511"/>
    <lineage>
        <taxon>Bacteria</taxon>
        <taxon>Bacillati</taxon>
        <taxon>Bacillota</taxon>
        <taxon>Bacilli</taxon>
        <taxon>Bacillales</taxon>
        <taxon>Bacillaceae</taxon>
        <taxon>Alkalihalophilus</taxon>
    </lineage>
</organism>